<protein>
    <recommendedName>
        <fullName evidence="1">Probable GTP-binding protein EngB</fullName>
    </recommendedName>
</protein>
<sequence length="195" mass="22454">MIIRDVELVKVARTPGDYPPPLKGEVAFVGRSNVGKSSLLNALFNRKIAFVSKTPGKTRSINFYLVNSKYYFVDLPGYGYAKVSKKERMLWKRLVEDYFKNRWSLQMVFLLVDGRIPPQDSDLMMVEWMKSLNIPFTIVLTKMDKVKMSERAKKLEEHRKVFSKYGEYTIIPTSSVTGEGISELLDLISTLLKEN</sequence>
<comment type="function">
    <text evidence="1">Necessary for normal cell division and for the maintenance of normal septation.</text>
</comment>
<comment type="cofactor">
    <cofactor evidence="1">
        <name>Mg(2+)</name>
        <dbReference type="ChEBI" id="CHEBI:18420"/>
    </cofactor>
</comment>
<comment type="similarity">
    <text evidence="1">Belongs to the TRAFAC class TrmE-Era-EngA-EngB-Septin-like GTPase superfamily. EngB GTPase family.</text>
</comment>
<dbReference type="EMBL" id="AE000512">
    <property type="protein sequence ID" value="AAD36534.1"/>
    <property type="molecule type" value="Genomic_DNA"/>
</dbReference>
<dbReference type="PIR" id="C72252">
    <property type="entry name" value="C72252"/>
</dbReference>
<dbReference type="RefSeq" id="NP_229266.1">
    <property type="nucleotide sequence ID" value="NC_000853.1"/>
</dbReference>
<dbReference type="RefSeq" id="WP_004081764.1">
    <property type="nucleotide sequence ID" value="NC_000853.1"/>
</dbReference>
<dbReference type="PDB" id="3PQC">
    <property type="method" value="X-ray"/>
    <property type="resolution" value="1.90 A"/>
    <property type="chains" value="A/B=1-195"/>
</dbReference>
<dbReference type="PDB" id="3PR1">
    <property type="method" value="X-ray"/>
    <property type="resolution" value="2.30 A"/>
    <property type="chains" value="A=1-195"/>
</dbReference>
<dbReference type="PDBsum" id="3PQC"/>
<dbReference type="PDBsum" id="3PR1"/>
<dbReference type="SMR" id="Q9X1H7"/>
<dbReference type="FunCoup" id="Q9X1H7">
    <property type="interactions" value="230"/>
</dbReference>
<dbReference type="STRING" id="243274.TM_1466"/>
<dbReference type="PaxDb" id="243274-THEMA_06980"/>
<dbReference type="EnsemblBacteria" id="AAD36534">
    <property type="protein sequence ID" value="AAD36534"/>
    <property type="gene ID" value="TM_1466"/>
</dbReference>
<dbReference type="KEGG" id="tma:TM1466"/>
<dbReference type="KEGG" id="tmi:THEMA_06980"/>
<dbReference type="KEGG" id="tmm:Tmari_1473"/>
<dbReference type="KEGG" id="tmw:THMA_1497"/>
<dbReference type="eggNOG" id="COG0218">
    <property type="taxonomic scope" value="Bacteria"/>
</dbReference>
<dbReference type="InParanoid" id="Q9X1H7"/>
<dbReference type="OrthoDB" id="9804921at2"/>
<dbReference type="EvolutionaryTrace" id="Q9X1H7"/>
<dbReference type="Proteomes" id="UP000008183">
    <property type="component" value="Chromosome"/>
</dbReference>
<dbReference type="GO" id="GO:0005829">
    <property type="term" value="C:cytosol"/>
    <property type="evidence" value="ECO:0000318"/>
    <property type="project" value="GO_Central"/>
</dbReference>
<dbReference type="GO" id="GO:0005525">
    <property type="term" value="F:GTP binding"/>
    <property type="evidence" value="ECO:0007669"/>
    <property type="project" value="UniProtKB-UniRule"/>
</dbReference>
<dbReference type="GO" id="GO:0046872">
    <property type="term" value="F:metal ion binding"/>
    <property type="evidence" value="ECO:0007669"/>
    <property type="project" value="UniProtKB-KW"/>
</dbReference>
<dbReference type="GO" id="GO:0000917">
    <property type="term" value="P:division septum assembly"/>
    <property type="evidence" value="ECO:0007669"/>
    <property type="project" value="UniProtKB-KW"/>
</dbReference>
<dbReference type="CDD" id="cd01876">
    <property type="entry name" value="YihA_EngB"/>
    <property type="match status" value="1"/>
</dbReference>
<dbReference type="FunFam" id="3.40.50.300:FF:000098">
    <property type="entry name" value="Probable GTP-binding protein EngB"/>
    <property type="match status" value="1"/>
</dbReference>
<dbReference type="Gene3D" id="3.40.50.300">
    <property type="entry name" value="P-loop containing nucleotide triphosphate hydrolases"/>
    <property type="match status" value="1"/>
</dbReference>
<dbReference type="HAMAP" id="MF_00321">
    <property type="entry name" value="GTPase_EngB"/>
    <property type="match status" value="1"/>
</dbReference>
<dbReference type="InterPro" id="IPR030393">
    <property type="entry name" value="G_ENGB_dom"/>
</dbReference>
<dbReference type="InterPro" id="IPR006073">
    <property type="entry name" value="GTP-bd"/>
</dbReference>
<dbReference type="InterPro" id="IPR019987">
    <property type="entry name" value="GTP-bd_ribosome_bio_YsxC"/>
</dbReference>
<dbReference type="InterPro" id="IPR027417">
    <property type="entry name" value="P-loop_NTPase"/>
</dbReference>
<dbReference type="InterPro" id="IPR005225">
    <property type="entry name" value="Small_GTP-bd"/>
</dbReference>
<dbReference type="NCBIfam" id="TIGR03598">
    <property type="entry name" value="GTPase_YsxC"/>
    <property type="match status" value="1"/>
</dbReference>
<dbReference type="NCBIfam" id="TIGR00231">
    <property type="entry name" value="small_GTP"/>
    <property type="match status" value="1"/>
</dbReference>
<dbReference type="PANTHER" id="PTHR11649:SF13">
    <property type="entry name" value="ENGB-TYPE G DOMAIN-CONTAINING PROTEIN"/>
    <property type="match status" value="1"/>
</dbReference>
<dbReference type="PANTHER" id="PTHR11649">
    <property type="entry name" value="MSS1/TRME-RELATED GTP-BINDING PROTEIN"/>
    <property type="match status" value="1"/>
</dbReference>
<dbReference type="Pfam" id="PF01926">
    <property type="entry name" value="MMR_HSR1"/>
    <property type="match status" value="1"/>
</dbReference>
<dbReference type="SUPFAM" id="SSF52540">
    <property type="entry name" value="P-loop containing nucleoside triphosphate hydrolases"/>
    <property type="match status" value="1"/>
</dbReference>
<dbReference type="PROSITE" id="PS51706">
    <property type="entry name" value="G_ENGB"/>
    <property type="match status" value="1"/>
</dbReference>
<organism>
    <name type="scientific">Thermotoga maritima (strain ATCC 43589 / DSM 3109 / JCM 10099 / NBRC 100826 / MSB8)</name>
    <dbReference type="NCBI Taxonomy" id="243274"/>
    <lineage>
        <taxon>Bacteria</taxon>
        <taxon>Thermotogati</taxon>
        <taxon>Thermotogota</taxon>
        <taxon>Thermotogae</taxon>
        <taxon>Thermotogales</taxon>
        <taxon>Thermotogaceae</taxon>
        <taxon>Thermotoga</taxon>
    </lineage>
</organism>
<feature type="chain" id="PRO_0000157794" description="Probable GTP-binding protein EngB">
    <location>
        <begin position="1"/>
        <end position="195"/>
    </location>
</feature>
<feature type="domain" description="EngB-type G" evidence="1">
    <location>
        <begin position="22"/>
        <end position="194"/>
    </location>
</feature>
<feature type="binding site" evidence="1">
    <location>
        <begin position="30"/>
        <end position="37"/>
    </location>
    <ligand>
        <name>GTP</name>
        <dbReference type="ChEBI" id="CHEBI:37565"/>
    </ligand>
</feature>
<feature type="binding site" evidence="1">
    <location>
        <position position="37"/>
    </location>
    <ligand>
        <name>Mg(2+)</name>
        <dbReference type="ChEBI" id="CHEBI:18420"/>
    </ligand>
</feature>
<feature type="binding site" evidence="1">
    <location>
        <begin position="56"/>
        <end position="60"/>
    </location>
    <ligand>
        <name>GTP</name>
        <dbReference type="ChEBI" id="CHEBI:37565"/>
    </ligand>
</feature>
<feature type="binding site" evidence="1">
    <location>
        <position position="58"/>
    </location>
    <ligand>
        <name>Mg(2+)</name>
        <dbReference type="ChEBI" id="CHEBI:18420"/>
    </ligand>
</feature>
<feature type="binding site" evidence="1">
    <location>
        <begin position="74"/>
        <end position="77"/>
    </location>
    <ligand>
        <name>GTP</name>
        <dbReference type="ChEBI" id="CHEBI:37565"/>
    </ligand>
</feature>
<feature type="binding site" evidence="1">
    <location>
        <begin position="141"/>
        <end position="144"/>
    </location>
    <ligand>
        <name>GTP</name>
        <dbReference type="ChEBI" id="CHEBI:37565"/>
    </ligand>
</feature>
<feature type="binding site" evidence="1">
    <location>
        <begin position="173"/>
        <end position="175"/>
    </location>
    <ligand>
        <name>GTP</name>
        <dbReference type="ChEBI" id="CHEBI:37565"/>
    </ligand>
</feature>
<feature type="strand" evidence="2">
    <location>
        <begin position="6"/>
        <end position="12"/>
    </location>
</feature>
<feature type="helix" evidence="3">
    <location>
        <begin position="15"/>
        <end position="17"/>
    </location>
</feature>
<feature type="strand" evidence="2">
    <location>
        <begin position="25"/>
        <end position="31"/>
    </location>
</feature>
<feature type="helix" evidence="2">
    <location>
        <begin position="36"/>
        <end position="44"/>
    </location>
</feature>
<feature type="strand" evidence="2">
    <location>
        <begin position="61"/>
        <end position="66"/>
    </location>
</feature>
<feature type="turn" evidence="2">
    <location>
        <begin position="67"/>
        <end position="69"/>
    </location>
</feature>
<feature type="strand" evidence="2">
    <location>
        <begin position="70"/>
        <end position="74"/>
    </location>
</feature>
<feature type="strand" evidence="2">
    <location>
        <begin position="78"/>
        <end position="81"/>
    </location>
</feature>
<feature type="helix" evidence="2">
    <location>
        <begin position="85"/>
        <end position="101"/>
    </location>
</feature>
<feature type="strand" evidence="2">
    <location>
        <begin position="105"/>
        <end position="113"/>
    </location>
</feature>
<feature type="helix" evidence="2">
    <location>
        <begin position="120"/>
        <end position="131"/>
    </location>
</feature>
<feature type="strand" evidence="2">
    <location>
        <begin position="136"/>
        <end position="141"/>
    </location>
</feature>
<feature type="helix" evidence="2">
    <location>
        <begin position="143"/>
        <end position="145"/>
    </location>
</feature>
<feature type="helix" evidence="2">
    <location>
        <begin position="148"/>
        <end position="150"/>
    </location>
</feature>
<feature type="helix" evidence="2">
    <location>
        <begin position="151"/>
        <end position="163"/>
    </location>
</feature>
<feature type="strand" evidence="2">
    <location>
        <begin position="170"/>
        <end position="172"/>
    </location>
</feature>
<feature type="turn" evidence="2">
    <location>
        <begin position="175"/>
        <end position="177"/>
    </location>
</feature>
<feature type="helix" evidence="2">
    <location>
        <begin position="181"/>
        <end position="192"/>
    </location>
</feature>
<evidence type="ECO:0000255" key="1">
    <source>
        <dbReference type="HAMAP-Rule" id="MF_00321"/>
    </source>
</evidence>
<evidence type="ECO:0007829" key="2">
    <source>
        <dbReference type="PDB" id="3PQC"/>
    </source>
</evidence>
<evidence type="ECO:0007829" key="3">
    <source>
        <dbReference type="PDB" id="3PR1"/>
    </source>
</evidence>
<name>ENGB_THEMA</name>
<accession>Q9X1H7</accession>
<reference key="1">
    <citation type="journal article" date="1999" name="Nature">
        <title>Evidence for lateral gene transfer between Archaea and Bacteria from genome sequence of Thermotoga maritima.</title>
        <authorList>
            <person name="Nelson K.E."/>
            <person name="Clayton R.A."/>
            <person name="Gill S.R."/>
            <person name="Gwinn M.L."/>
            <person name="Dodson R.J."/>
            <person name="Haft D.H."/>
            <person name="Hickey E.K."/>
            <person name="Peterson J.D."/>
            <person name="Nelson W.C."/>
            <person name="Ketchum K.A."/>
            <person name="McDonald L.A."/>
            <person name="Utterback T.R."/>
            <person name="Malek J.A."/>
            <person name="Linher K.D."/>
            <person name="Garrett M.M."/>
            <person name="Stewart A.M."/>
            <person name="Cotton M.D."/>
            <person name="Pratt M.S."/>
            <person name="Phillips C.A."/>
            <person name="Richardson D.L."/>
            <person name="Heidelberg J.F."/>
            <person name="Sutton G.G."/>
            <person name="Fleischmann R.D."/>
            <person name="Eisen J.A."/>
            <person name="White O."/>
            <person name="Salzberg S.L."/>
            <person name="Smith H.O."/>
            <person name="Venter J.C."/>
            <person name="Fraser C.M."/>
        </authorList>
    </citation>
    <scope>NUCLEOTIDE SEQUENCE [LARGE SCALE GENOMIC DNA]</scope>
    <source>
        <strain>ATCC 43589 / DSM 3109 / JCM 10099 / NBRC 100826 / MSB8</strain>
    </source>
</reference>
<gene>
    <name evidence="1" type="primary">engB</name>
    <name type="ordered locus">TM_1466</name>
</gene>
<keyword id="KW-0002">3D-structure</keyword>
<keyword id="KW-0131">Cell cycle</keyword>
<keyword id="KW-0132">Cell division</keyword>
<keyword id="KW-0342">GTP-binding</keyword>
<keyword id="KW-0460">Magnesium</keyword>
<keyword id="KW-0479">Metal-binding</keyword>
<keyword id="KW-0547">Nucleotide-binding</keyword>
<keyword id="KW-1185">Reference proteome</keyword>
<keyword id="KW-0717">Septation</keyword>
<proteinExistence type="evidence at protein level"/>